<accession>O87170</accession>
<accession>G2IQR0</accession>
<organism>
    <name type="scientific">Sphingobium sp. (strain NBRC 103272 / SYK-6)</name>
    <dbReference type="NCBI Taxonomy" id="627192"/>
    <lineage>
        <taxon>Bacteria</taxon>
        <taxon>Pseudomonadati</taxon>
        <taxon>Pseudomonadota</taxon>
        <taxon>Alphaproteobacteria</taxon>
        <taxon>Sphingomonadales</taxon>
        <taxon>Sphingomonadaceae</taxon>
        <taxon>Sphingobium</taxon>
    </lineage>
</organism>
<sequence>MTNDERILSWNETPSKPRYTPPPGAIDAHCHVFGPMAQFPFSPKAKYLPRDAGPDMLFALRDHLGFARNVIVQASCHGTDNAATLDAIARAQGKARGIAVVDPAIDEAELAALHEGGMRGIRFNFLKRLVDDAPKDKFLEVAGRLPAGWHVVIYFEADILEELRPFMDAIPVPIVIDHMGRPDVRQGPDGADMKAFRRLLDSREDIWFKATCPDRLDPAGPPWDDFARSVAPLVADYADRVIWGTDWPHPNMQDAIPDDGLVVDMIPRIAPTPELQHKMLVTNPMRLYWSEEM</sequence>
<keyword id="KW-0002">3D-structure</keyword>
<keyword id="KW-0058">Aromatic hydrocarbons catabolism</keyword>
<keyword id="KW-0378">Hydrolase</keyword>
<keyword id="KW-1185">Reference proteome</keyword>
<dbReference type="EC" id="3.1.1.57" evidence="2 3"/>
<dbReference type="EMBL" id="AB015964">
    <property type="protein sequence ID" value="BAA33799.1"/>
    <property type="molecule type" value="Genomic_DNA"/>
</dbReference>
<dbReference type="EMBL" id="AB073227">
    <property type="protein sequence ID" value="BAB88736.1"/>
    <property type="molecule type" value="Genomic_DNA"/>
</dbReference>
<dbReference type="EMBL" id="AP012222">
    <property type="protein sequence ID" value="BAK65932.1"/>
    <property type="molecule type" value="Genomic_DNA"/>
</dbReference>
<dbReference type="RefSeq" id="WP_014075583.1">
    <property type="nucleotide sequence ID" value="NC_015976.1"/>
</dbReference>
<dbReference type="PDB" id="4D8L">
    <property type="method" value="X-ray"/>
    <property type="resolution" value="2.00 A"/>
    <property type="chains" value="A=2-293"/>
</dbReference>
<dbReference type="PDB" id="4DI8">
    <property type="method" value="X-ray"/>
    <property type="resolution" value="1.81 A"/>
    <property type="chains" value="A/B=2-293"/>
</dbReference>
<dbReference type="PDB" id="4DI9">
    <property type="method" value="X-ray"/>
    <property type="resolution" value="1.35 A"/>
    <property type="chains" value="A=2-293"/>
</dbReference>
<dbReference type="PDB" id="4DIA">
    <property type="method" value="X-ray"/>
    <property type="resolution" value="2.00 A"/>
    <property type="chains" value="A=2-293"/>
</dbReference>
<dbReference type="PDBsum" id="4D8L"/>
<dbReference type="PDBsum" id="4DI8"/>
<dbReference type="PDBsum" id="4DI9"/>
<dbReference type="PDBsum" id="4DIA"/>
<dbReference type="SMR" id="O87170"/>
<dbReference type="STRING" id="627192.SLG_12570"/>
<dbReference type="KEGG" id="ssy:SLG_12570"/>
<dbReference type="eggNOG" id="COG3618">
    <property type="taxonomic scope" value="Bacteria"/>
</dbReference>
<dbReference type="HOGENOM" id="CLU_064039_2_1_5"/>
<dbReference type="OrthoDB" id="9787654at2"/>
<dbReference type="BioCyc" id="MetaCyc:MONOMER-3467"/>
<dbReference type="BRENDA" id="3.1.1.57">
    <property type="organism ID" value="7695"/>
</dbReference>
<dbReference type="UniPathway" id="UPA00892"/>
<dbReference type="EvolutionaryTrace" id="O87170"/>
<dbReference type="Proteomes" id="UP000001275">
    <property type="component" value="Chromosome"/>
</dbReference>
<dbReference type="GO" id="GO:0047554">
    <property type="term" value="F:2-pyrone-4,6-dicarboxylate lactonase activity"/>
    <property type="evidence" value="ECO:0000314"/>
    <property type="project" value="UniProtKB"/>
</dbReference>
<dbReference type="GO" id="GO:0019619">
    <property type="term" value="P:3,4-dihydroxybenzoate catabolic process"/>
    <property type="evidence" value="ECO:0000314"/>
    <property type="project" value="UniProtKB"/>
</dbReference>
<dbReference type="GO" id="GO:0046274">
    <property type="term" value="P:lignin catabolic process"/>
    <property type="evidence" value="ECO:0007669"/>
    <property type="project" value="UniProtKB-UniPathway"/>
</dbReference>
<dbReference type="FunFam" id="3.20.20.140:FF:000100">
    <property type="entry name" value="2-pyrone-4,6-dicarboxylate hydrolase"/>
    <property type="match status" value="1"/>
</dbReference>
<dbReference type="Gene3D" id="3.20.20.140">
    <property type="entry name" value="Metal-dependent hydrolases"/>
    <property type="match status" value="1"/>
</dbReference>
<dbReference type="InterPro" id="IPR006680">
    <property type="entry name" value="Amidohydro-rel"/>
</dbReference>
<dbReference type="InterPro" id="IPR052358">
    <property type="entry name" value="Aro_Compnd_Degr_Hydrolases"/>
</dbReference>
<dbReference type="InterPro" id="IPR032466">
    <property type="entry name" value="Metal_Hydrolase"/>
</dbReference>
<dbReference type="PANTHER" id="PTHR35563">
    <property type="entry name" value="BARREL METAL-DEPENDENT HYDROLASE, PUTATIVE (AFU_ORTHOLOGUE AFUA_1G16240)-RELATED"/>
    <property type="match status" value="1"/>
</dbReference>
<dbReference type="PANTHER" id="PTHR35563:SF2">
    <property type="entry name" value="BARREL METAL-DEPENDENT HYDROLASE, PUTATIVE (AFU_ORTHOLOGUE AFUA_1G16240)-RELATED"/>
    <property type="match status" value="1"/>
</dbReference>
<dbReference type="Pfam" id="PF04909">
    <property type="entry name" value="Amidohydro_2"/>
    <property type="match status" value="1"/>
</dbReference>
<dbReference type="SUPFAM" id="SSF51556">
    <property type="entry name" value="Metallo-dependent hydrolases"/>
    <property type="match status" value="1"/>
</dbReference>
<comment type="function">
    <text evidence="2 3 4">Contributes to the degradation of lignin at the level of the protocatechuate 4,5-cleavage pathway (PubMed:9864312). Catalyzes the hydrolysis of 2-pyrone-4,6-dicarboxylate (PDC) to (4E)-oxalomesaconate (OMA) (PubMed:22475079, PubMed:29658701). The keto form of OMA can tautomerize into the enol form, 4-carboxy-2-hydroxymuconate (CHM), under certain pH conditions (PubMed:22475079). Also catalyzes the reverse reaction (PubMed:22475079, PubMed:9864312). Is essential for the growth of Sphingobium sp. SYK-6 on vanillate but is not responsible for the growth of this strain on syringate (PubMed:9864312).</text>
</comment>
<comment type="catalytic activity">
    <reaction evidence="2 3">
        <text>2-oxo-2H-pyran-4,6-dicarboxylate + H2O = (1E)-4-oxobut-1-ene-1,2,4-tricarboxylate + H(+)</text>
        <dbReference type="Rhea" id="RHEA:10644"/>
        <dbReference type="ChEBI" id="CHEBI:15377"/>
        <dbReference type="ChEBI" id="CHEBI:15378"/>
        <dbReference type="ChEBI" id="CHEBI:57471"/>
        <dbReference type="ChEBI" id="CHEBI:58304"/>
        <dbReference type="EC" id="3.1.1.57"/>
    </reaction>
</comment>
<comment type="activity regulation">
    <text evidence="2 4">Strongly inhibited by 1 mM Zn(2+) ions (PubMed:9864312). Also inhibited by pyridine-2,4-dicarboxylic acid, 5-hydroxyisophthalic acid and 5,5'-dithiobis(2-nitrobenzoic acid) (Ellman reagent) (PubMed:22475079, PubMed:9864312).</text>
</comment>
<comment type="biophysicochemical properties">
    <kinetics>
        <KM evidence="2">18 uM for a mixture of (4E)-oxalomesaconate/4-carboxy-2-hydroxymuconate (at pH 8.25)</KM>
        <KM evidence="2">48 uM for 2-pyrone-4,6-dicarboxylate (at pH 8.25)</KM>
        <KM evidence="4">49 uM for 4-carboxy-2-hydroxymuconate (at pH 7 and at 30 degrees Celsius)</KM>
        <KM evidence="4">74 uM for 2-pyrone-4,6-dicarboxylate (at pH 8.5 and at 30 degrees Celsius)</KM>
        <text evidence="2">kcat is 342 sec(-1) for the hydrolysis of 2-pyrone-4,6-dicarboxylate (at pH 8.25). kcat is 116 sec(-1) for the synthesis of 2-pyrone-4,6-dicarboxylat from OMA/CHM (at pH 8.25).</text>
    </kinetics>
    <phDependence>
        <text evidence="4">Optimum pH for hydrolysis of PDC is 8.5 and optimum pH for synthesis of PDC is between 6.0 to 7.5.</text>
    </phDependence>
    <temperatureDependence>
        <text evidence="4">Optimum temperature is 50 degrees Celsius.</text>
    </temperatureDependence>
</comment>
<comment type="pathway">
    <text evidence="4">Secondary metabolite metabolism; lignin degradation.</text>
</comment>
<comment type="subunit">
    <text evidence="4">Monomer.</text>
</comment>
<comment type="disruption phenotype">
    <text evidence="4">Cells lacking this gene show a complete loss of PDC hydrolase activity and a growth defect on vanillic acid. Growth on syringic acid is not affected.</text>
</comment>
<comment type="miscellaneous">
    <text evidence="8">This is the first enzyme from the amidohydrolase superfamily that does not require a divalent metal ion for catalytic activity.</text>
</comment>
<comment type="similarity">
    <text evidence="7">Belongs to the metallo-dependent hydrolases superfamily. PDC hydrolase family.</text>
</comment>
<name>LIGI_SPHSK</name>
<evidence type="ECO:0000256" key="1">
    <source>
        <dbReference type="SAM" id="MobiDB-lite"/>
    </source>
</evidence>
<evidence type="ECO:0000269" key="2">
    <source>
    </source>
</evidence>
<evidence type="ECO:0000269" key="3">
    <source>
    </source>
</evidence>
<evidence type="ECO:0000269" key="4">
    <source>
    </source>
</evidence>
<evidence type="ECO:0000303" key="5">
    <source>
    </source>
</evidence>
<evidence type="ECO:0000303" key="6">
    <source>
    </source>
</evidence>
<evidence type="ECO:0000305" key="7"/>
<evidence type="ECO:0000305" key="8">
    <source>
    </source>
</evidence>
<evidence type="ECO:0000312" key="9">
    <source>
        <dbReference type="EMBL" id="BAK65932.1"/>
    </source>
</evidence>
<evidence type="ECO:0007829" key="10">
    <source>
        <dbReference type="PDB" id="4DI9"/>
    </source>
</evidence>
<reference key="1">
    <citation type="journal article" date="1999" name="J. Bacteriol.">
        <title>Genetic and biochemical characterization of a 2-pyrone-4, 6-dicarboxylic acid hydrolase involved in the protocatechuate 4, 5-cleavage pathway of Sphingomonas paucimobilis SYK-6.</title>
        <authorList>
            <person name="Masai E."/>
            <person name="Shinohara S."/>
            <person name="Hara H."/>
            <person name="Nishikawa S."/>
            <person name="Katayama Y."/>
            <person name="Fukuda M."/>
        </authorList>
    </citation>
    <scope>NUCLEOTIDE SEQUENCE [GENOMIC DNA]</scope>
    <scope>FUNCTION</scope>
    <scope>CATALYTIC ACTIVITY</scope>
    <scope>DISRUPTION PHENOTYPE</scope>
    <scope>BIOPHYSICOCHEMICAL PROPERTIES</scope>
    <scope>ACTIVITY REGULATION</scope>
    <scope>SUBUNIT</scope>
    <scope>PATHWAY</scope>
    <source>
        <strain>NBRC 103272 / SYK-6</strain>
    </source>
</reference>
<reference key="2">
    <citation type="journal article" date="2003" name="J. Bacteriol.">
        <title>Characterization of the 4-carboxy-4-hydroxy-2-oxoadipate aldolase gene and operon structure of the protocatechuate 4,5-cleavage pathway genes in Sphingomonas paucimobilis SYK-6.</title>
        <authorList>
            <person name="Hara H."/>
            <person name="Masai E."/>
            <person name="Miyauchi K."/>
            <person name="Katayama Y."/>
            <person name="Fukuda M."/>
        </authorList>
    </citation>
    <scope>NUCLEOTIDE SEQUENCE [GENOMIC DNA]</scope>
    <source>
        <strain>NBRC 103272 / SYK-6</strain>
    </source>
</reference>
<reference key="3">
    <citation type="journal article" date="2012" name="J. Bacteriol.">
        <title>Complete genome sequence of Sphingobium sp. strain SYK-6, a degrader of lignin-derived biaryls and monoaryls.</title>
        <authorList>
            <person name="Masai E."/>
            <person name="Kamimura N."/>
            <person name="Kasai D."/>
            <person name="Oguchi A."/>
            <person name="Ankai A."/>
            <person name="Fukui S."/>
            <person name="Takahashi M."/>
            <person name="Yashiro I."/>
            <person name="Sasaki H."/>
            <person name="Harada T."/>
            <person name="Nakamura S."/>
            <person name="Katano Y."/>
            <person name="Narita-Yamada S."/>
            <person name="Nakazawa H."/>
            <person name="Hara H."/>
            <person name="Katayama Y."/>
            <person name="Fukuda M."/>
            <person name="Yamazaki S."/>
            <person name="Fujita N."/>
        </authorList>
    </citation>
    <scope>NUCLEOTIDE SEQUENCE [LARGE SCALE GENOMIC DNA]</scope>
    <source>
        <strain>NBRC 103272 / SYK-6</strain>
    </source>
</reference>
<reference key="4">
    <citation type="journal article" date="2018" name="Biochemistry">
        <title>Functional annotation of LigU as a 1,3-allylic isomerase during the degradation of lignin in the protocatechuate 4,5-cleavage pathway from the soil bacterium Sphingobium sp. SYK-6.</title>
        <authorList>
            <person name="Hogancamp T.N."/>
            <person name="Raushel F.M."/>
        </authorList>
    </citation>
    <scope>FUNCTION</scope>
    <scope>CATALYTIC ACTIVITY</scope>
    <source>
        <strain>NBRC 103272 / SYK-6</strain>
    </source>
</reference>
<reference key="5">
    <citation type="journal article" date="2012" name="Biochemistry">
        <title>Structure and catalytic mechanism of LigI: insight into the amidohydrolase enzymes of cog3618 and lignin degradation.</title>
        <authorList>
            <person name="Hobbs M.E."/>
            <person name="Malashkevich V."/>
            <person name="Williams H.J."/>
            <person name="Xu C."/>
            <person name="Sauder J.M."/>
            <person name="Burley S.K."/>
            <person name="Almo S.C."/>
            <person name="Raushel F.M."/>
        </authorList>
    </citation>
    <scope>X-RAY CRYSTALLOGRAPHY (1.35 ANGSTROMS) OF 2-293 OF WILD-TYPE AND MUTANTS ALA-246 AND ASN-246 IN COMPLEX WITH SUBSTRATE</scope>
    <scope>FUNCTION</scope>
    <scope>CATALYTIC ACTIVITY</scope>
    <scope>MUTAGENESIS OF ASP-246</scope>
    <scope>ACTIVE SITE</scope>
    <scope>BIOPHYSICOCHEMICAL PROPERTIES</scope>
    <scope>ACTIVITY REGULATION</scope>
    <scope>REACTION MECHANISM</scope>
</reference>
<feature type="chain" id="PRO_0000422783" description="2-pyrone-4,6-dicarboxylate hydrolase">
    <location>
        <begin position="1"/>
        <end position="293"/>
    </location>
</feature>
<feature type="region of interest" description="Disordered" evidence="1">
    <location>
        <begin position="1"/>
        <end position="20"/>
    </location>
</feature>
<feature type="active site" description="Proton acceptor" evidence="8">
    <location>
        <position position="246"/>
    </location>
</feature>
<feature type="binding site" evidence="2">
    <location>
        <begin position="29"/>
        <end position="31"/>
    </location>
    <ligand>
        <name>substrate</name>
    </ligand>
</feature>
<feature type="binding site" evidence="2">
    <location>
        <position position="47"/>
    </location>
    <ligand>
        <name>substrate</name>
    </ligand>
</feature>
<feature type="binding site" evidence="2">
    <location>
        <position position="75"/>
    </location>
    <ligand>
        <name>substrate</name>
    </ligand>
</feature>
<feature type="binding site" evidence="2">
    <location>
        <position position="122"/>
    </location>
    <ligand>
        <name>substrate</name>
    </ligand>
</feature>
<feature type="binding site" evidence="2">
    <location>
        <position position="128"/>
    </location>
    <ligand>
        <name>substrate</name>
    </ligand>
</feature>
<feature type="binding site" evidence="2">
    <location>
        <position position="154"/>
    </location>
    <ligand>
        <name>substrate</name>
    </ligand>
</feature>
<feature type="binding site" evidence="2">
    <location>
        <position position="178"/>
    </location>
    <ligand>
        <name>substrate</name>
    </ligand>
</feature>
<feature type="binding site" evidence="2">
    <location>
        <position position="251"/>
    </location>
    <ligand>
        <name>substrate</name>
    </ligand>
</feature>
<feature type="mutagenesis site" description="Loss of catalytic activity." evidence="2">
    <original>D</original>
    <variation>A</variation>
    <location>
        <position position="246"/>
    </location>
</feature>
<feature type="mutagenesis site" description="Almost inactive." evidence="2">
    <original>D</original>
    <variation>N</variation>
    <location>
        <position position="246"/>
    </location>
</feature>
<feature type="helix" evidence="10">
    <location>
        <begin position="3"/>
        <end position="5"/>
    </location>
</feature>
<feature type="strand" evidence="10">
    <location>
        <begin position="26"/>
        <end position="30"/>
    </location>
</feature>
<feature type="turn" evidence="10">
    <location>
        <begin position="36"/>
        <end position="38"/>
    </location>
</feature>
<feature type="helix" evidence="10">
    <location>
        <begin position="54"/>
        <end position="64"/>
    </location>
</feature>
<feature type="strand" evidence="10">
    <location>
        <begin position="67"/>
        <end position="72"/>
    </location>
</feature>
<feature type="helix" evidence="10">
    <location>
        <begin position="75"/>
        <end position="77"/>
    </location>
</feature>
<feature type="helix" evidence="10">
    <location>
        <begin position="82"/>
        <end position="90"/>
    </location>
</feature>
<feature type="turn" evidence="10">
    <location>
        <begin position="91"/>
        <end position="93"/>
    </location>
</feature>
<feature type="strand" evidence="10">
    <location>
        <begin position="94"/>
        <end position="99"/>
    </location>
</feature>
<feature type="helix" evidence="10">
    <location>
        <begin position="107"/>
        <end position="115"/>
    </location>
</feature>
<feature type="strand" evidence="10">
    <location>
        <begin position="118"/>
        <end position="124"/>
    </location>
</feature>
<feature type="turn" evidence="10">
    <location>
        <begin position="127"/>
        <end position="129"/>
    </location>
</feature>
<feature type="helix" evidence="10">
    <location>
        <begin position="135"/>
        <end position="142"/>
    </location>
</feature>
<feature type="strand" evidence="10">
    <location>
        <begin position="150"/>
        <end position="154"/>
    </location>
</feature>
<feature type="helix" evidence="10">
    <location>
        <begin position="157"/>
        <end position="159"/>
    </location>
</feature>
<feature type="helix" evidence="10">
    <location>
        <begin position="160"/>
        <end position="169"/>
    </location>
</feature>
<feature type="strand" evidence="10">
    <location>
        <begin position="174"/>
        <end position="176"/>
    </location>
</feature>
<feature type="helix" evidence="10">
    <location>
        <begin position="177"/>
        <end position="180"/>
    </location>
</feature>
<feature type="helix" evidence="10">
    <location>
        <begin position="184"/>
        <end position="186"/>
    </location>
</feature>
<feature type="helix" evidence="10">
    <location>
        <begin position="191"/>
        <end position="202"/>
    </location>
</feature>
<feature type="strand" evidence="10">
    <location>
        <begin position="206"/>
        <end position="209"/>
    </location>
</feature>
<feature type="helix" evidence="10">
    <location>
        <begin position="213"/>
        <end position="216"/>
    </location>
</feature>
<feature type="helix" evidence="10">
    <location>
        <begin position="224"/>
        <end position="236"/>
    </location>
</feature>
<feature type="turn" evidence="10">
    <location>
        <begin position="237"/>
        <end position="239"/>
    </location>
</feature>
<feature type="strand" evidence="10">
    <location>
        <begin position="240"/>
        <end position="242"/>
    </location>
</feature>
<feature type="helix" evidence="10">
    <location>
        <begin position="259"/>
        <end position="264"/>
    </location>
</feature>
<feature type="helix" evidence="10">
    <location>
        <begin position="266"/>
        <end position="269"/>
    </location>
</feature>
<feature type="helix" evidence="10">
    <location>
        <begin position="273"/>
        <end position="280"/>
    </location>
</feature>
<feature type="helix" evidence="10">
    <location>
        <begin position="282"/>
        <end position="288"/>
    </location>
</feature>
<feature type="helix" evidence="10">
    <location>
        <begin position="290"/>
        <end position="292"/>
    </location>
</feature>
<gene>
    <name evidence="9" type="primary">ligI</name>
    <name evidence="9" type="ORF">SLG_12570</name>
</gene>
<proteinExistence type="evidence at protein level"/>
<protein>
    <recommendedName>
        <fullName evidence="6">2-pyrone-4,6-dicarboxylate hydrolase</fullName>
        <shortName evidence="6">PDC hydrolase</shortName>
        <ecNumber evidence="2 3">3.1.1.57</ecNumber>
    </recommendedName>
    <alternativeName>
        <fullName evidence="5">2-pyrone-4,6-dicarboxylate lactonase</fullName>
    </alternativeName>
</protein>